<comment type="catalytic activity">
    <reaction evidence="3">
        <text>Releases C-terminal Arg and Lys from polypeptides.</text>
        <dbReference type="EC" id="3.4.17.22"/>
    </reaction>
</comment>
<comment type="cofactor">
    <cofactor evidence="3">
        <name>Zn(2+)</name>
        <dbReference type="ChEBI" id="CHEBI:29105"/>
    </cofactor>
    <text evidence="3">Binds 2 Zn(2+) ions per subunit.</text>
</comment>
<comment type="subcellular location">
    <molecule>Isoform 1</molecule>
    <subcellularLocation>
        <location evidence="3">Cell membrane</location>
        <topology evidence="4">Single-pass type I membrane protein</topology>
    </subcellularLocation>
</comment>
<comment type="subcellular location">
    <molecule>Isoform 2</molecule>
    <subcellularLocation>
        <location evidence="7">Nucleus</location>
    </subcellularLocation>
</comment>
<comment type="alternative products">
    <event type="alternative splicing"/>
    <isoform>
        <id>Q9JHW1-1</id>
        <name evidence="8">1</name>
        <sequence type="displayed"/>
    </isoform>
    <isoform>
        <id>Q9JHW1-2</id>
        <name evidence="7">2</name>
        <name evidence="9">CPD-N</name>
        <sequence type="described" ref="VSP_051712 VSP_051713"/>
    </isoform>
</comment>
<comment type="tissue specificity">
    <text evidence="7 8">Isoform 1 is widely expressed with highest levels in the hippocampus, spinal cord, atrium, colon, testis and ovaries. Detected in the liver of females but not males. Isoform 2 is not detected in brain or lung.</text>
</comment>
<comment type="induction">
    <molecule>Isoform 2</molecule>
    <text evidence="7">Up-regulated by exposure to prolactin or interleukin-2.</text>
</comment>
<comment type="domain">
    <text evidence="10">There are 3 carboxypeptidase-like domains. Only the first two domains seem to have kept a catalytic activity.</text>
</comment>
<comment type="similarity">
    <text evidence="4">Belongs to the peptidase M14 family.</text>
</comment>
<organism>
    <name type="scientific">Rattus norvegicus</name>
    <name type="common">Rat</name>
    <dbReference type="NCBI Taxonomy" id="10116"/>
    <lineage>
        <taxon>Eukaryota</taxon>
        <taxon>Metazoa</taxon>
        <taxon>Chordata</taxon>
        <taxon>Craniata</taxon>
        <taxon>Vertebrata</taxon>
        <taxon>Euteleostomi</taxon>
        <taxon>Mammalia</taxon>
        <taxon>Eutheria</taxon>
        <taxon>Euarchontoglires</taxon>
        <taxon>Glires</taxon>
        <taxon>Rodentia</taxon>
        <taxon>Myomorpha</taxon>
        <taxon>Muroidea</taxon>
        <taxon>Muridae</taxon>
        <taxon>Murinae</taxon>
        <taxon>Rattus</taxon>
    </lineage>
</organism>
<reference evidence="11 12" key="1">
    <citation type="journal article" date="1997" name="DNA Cell Biol.">
        <title>Cloning and sequence analysis of cDNA encoding rat carboxypeptidase D.</title>
        <authorList>
            <person name="Xin X."/>
            <person name="Varlamov O."/>
            <person name="Day R."/>
            <person name="Dong W."/>
            <person name="Bridgett M.M."/>
            <person name="Leiter E.H."/>
            <person name="Fricker L.D."/>
        </authorList>
    </citation>
    <scope>NUCLEOTIDE SEQUENCE [MRNA] (ISOFORM 1)</scope>
    <scope>TISSUE SPECIFICITY</scope>
    <source>
        <strain evidence="12">Sprague-Dawley</strain>
        <tissue evidence="8">Hippocampus</tissue>
        <tissue evidence="8">Testis</tissue>
    </source>
</reference>
<reference evidence="11 13" key="2">
    <citation type="journal article" date="2001" name="Endocrinology">
        <title>Identification and nuclear localization of a novel prolactin and cytokine-responsive carboxypeptidase D.</title>
        <authorList>
            <person name="Too C.K.L."/>
            <person name="Vickaryous N."/>
            <person name="Boudreau R.T.M."/>
            <person name="Sangster S.M."/>
        </authorList>
    </citation>
    <scope>NUCLEOTIDE SEQUENCE [MRNA] (ISOFORM 2)</scope>
    <scope>SUBCELLULAR LOCATION</scope>
    <scope>TISSUE SPECIFICITY</scope>
    <scope>INDUCTION</scope>
</reference>
<reference key="3">
    <citation type="journal article" date="2012" name="Nat. Commun.">
        <title>Quantitative maps of protein phosphorylation sites across 14 different rat organs and tissues.</title>
        <authorList>
            <person name="Lundby A."/>
            <person name="Secher A."/>
            <person name="Lage K."/>
            <person name="Nordsborg N.B."/>
            <person name="Dmytriyev A."/>
            <person name="Lundby C."/>
            <person name="Olsen J.V."/>
        </authorList>
    </citation>
    <scope>PHOSPHORYLATION [LARGE SCALE ANALYSIS] AT THR-1366 AND THR-1368</scope>
    <scope>IDENTIFICATION BY MASS SPECTROMETRY [LARGE SCALE ANALYSIS]</scope>
</reference>
<reference key="4">
    <citation type="journal article" date="2013" name="J. Proteome Res.">
        <title>Site-specific glycan-peptide analysis for determination of N-glycoproteome heterogeneity.</title>
        <authorList>
            <person name="Parker B.L."/>
            <person name="Thaysen-Andersen M."/>
            <person name="Solis N."/>
            <person name="Scott N.E."/>
            <person name="Larsen M.R."/>
            <person name="Graham M.E."/>
            <person name="Packer N.H."/>
            <person name="Cordwell S.J."/>
        </authorList>
    </citation>
    <scope>GLYCOSYLATION [LARGE SCALE ANALYSIS] AT ASN-811 AND ASN-1068</scope>
    <scope>IDENTIFICATION BY MASS SPECTROMETRY [LARGE SCALE ANALYSIS]</scope>
    <source>
        <tissue>Brain</tissue>
    </source>
</reference>
<evidence type="ECO:0000250" key="1">
    <source>
        <dbReference type="UniProtKB" id="O75976"/>
    </source>
</evidence>
<evidence type="ECO:0000250" key="2">
    <source>
        <dbReference type="UniProtKB" id="O89001"/>
    </source>
</evidence>
<evidence type="ECO:0000250" key="3">
    <source>
        <dbReference type="UniProtKB" id="Q90240"/>
    </source>
</evidence>
<evidence type="ECO:0000255" key="4"/>
<evidence type="ECO:0000255" key="5">
    <source>
        <dbReference type="PROSITE-ProRule" id="PRU01379"/>
    </source>
</evidence>
<evidence type="ECO:0000256" key="6">
    <source>
        <dbReference type="SAM" id="MobiDB-lite"/>
    </source>
</evidence>
<evidence type="ECO:0000269" key="7">
    <source>
    </source>
</evidence>
<evidence type="ECO:0000269" key="8">
    <source>
    </source>
</evidence>
<evidence type="ECO:0000303" key="9">
    <source>
    </source>
</evidence>
<evidence type="ECO:0000303" key="10">
    <source>
    </source>
</evidence>
<evidence type="ECO:0000305" key="11"/>
<evidence type="ECO:0000312" key="12">
    <source>
        <dbReference type="EMBL" id="AAB70456.1"/>
    </source>
</evidence>
<evidence type="ECO:0000312" key="13">
    <source>
        <dbReference type="EMBL" id="AAF91481.1"/>
    </source>
</evidence>
<evidence type="ECO:0000312" key="14">
    <source>
        <dbReference type="RGD" id="2393"/>
    </source>
</evidence>
<evidence type="ECO:0007744" key="15">
    <source>
    </source>
</evidence>
<evidence type="ECO:0007744" key="16">
    <source>
    </source>
</evidence>
<keyword id="KW-0025">Alternative splicing</keyword>
<keyword id="KW-0121">Carboxypeptidase</keyword>
<keyword id="KW-1003">Cell membrane</keyword>
<keyword id="KW-0325">Glycoprotein</keyword>
<keyword id="KW-0378">Hydrolase</keyword>
<keyword id="KW-0449">Lipoprotein</keyword>
<keyword id="KW-0472">Membrane</keyword>
<keyword id="KW-0479">Metal-binding</keyword>
<keyword id="KW-0482">Metalloprotease</keyword>
<keyword id="KW-0539">Nucleus</keyword>
<keyword id="KW-0564">Palmitate</keyword>
<keyword id="KW-0597">Phosphoprotein</keyword>
<keyword id="KW-0645">Protease</keyword>
<keyword id="KW-1185">Reference proteome</keyword>
<keyword id="KW-0677">Repeat</keyword>
<keyword id="KW-0732">Signal</keyword>
<keyword id="KW-0812">Transmembrane</keyword>
<keyword id="KW-1133">Transmembrane helix</keyword>
<keyword id="KW-0862">Zinc</keyword>
<protein>
    <recommendedName>
        <fullName>Carboxypeptidase D</fullName>
        <ecNumber>3.4.17.22</ecNumber>
    </recommendedName>
    <alternativeName>
        <fullName>Metallocarboxypeptidase D</fullName>
    </alternativeName>
    <alternativeName>
        <fullName>gp180</fullName>
    </alternativeName>
</protein>
<feature type="signal peptide" evidence="4">
    <location>
        <begin position="1"/>
        <end position="37"/>
    </location>
</feature>
<feature type="chain" id="PRO_0000004403" description="Carboxypeptidase D" evidence="4">
    <location>
        <begin position="38"/>
        <end position="1378"/>
    </location>
</feature>
<feature type="topological domain" description="Extracellular" evidence="4">
    <location>
        <begin position="38"/>
        <end position="1297"/>
    </location>
</feature>
<feature type="transmembrane region" description="Helical" evidence="4">
    <location>
        <begin position="1298"/>
        <end position="1318"/>
    </location>
</feature>
<feature type="topological domain" description="Cytoplasmic" evidence="4">
    <location>
        <begin position="1319"/>
        <end position="1378"/>
    </location>
</feature>
<feature type="domain" description="Peptidase M14 1" evidence="5">
    <location>
        <begin position="62"/>
        <end position="380"/>
    </location>
</feature>
<feature type="domain" description="Peptidase M14 2" evidence="5">
    <location>
        <begin position="502"/>
        <end position="792"/>
    </location>
</feature>
<feature type="domain" description="Peptidase M14 3" evidence="5">
    <location>
        <begin position="930"/>
        <end position="1209"/>
    </location>
</feature>
<feature type="region of interest" description="Disordered" evidence="6">
    <location>
        <begin position="189"/>
        <end position="232"/>
    </location>
</feature>
<feature type="region of interest" description="Disordered" evidence="6">
    <location>
        <begin position="875"/>
        <end position="898"/>
    </location>
</feature>
<feature type="region of interest" description="Disordered" evidence="6">
    <location>
        <begin position="1039"/>
        <end position="1068"/>
    </location>
</feature>
<feature type="region of interest" description="Disordered" evidence="6">
    <location>
        <begin position="1357"/>
        <end position="1378"/>
    </location>
</feature>
<feature type="short sequence motif" description="Cell attachment site" evidence="4">
    <location>
        <begin position="162"/>
        <end position="164"/>
    </location>
</feature>
<feature type="compositionally biased region" description="Basic and acidic residues" evidence="6">
    <location>
        <begin position="1039"/>
        <end position="1048"/>
    </location>
</feature>
<feature type="active site" description="Proton donor/acceptor" evidence="5">
    <location>
        <position position="350"/>
    </location>
</feature>
<feature type="active site" description="Proton donor/acceptor" evidence="5">
    <location>
        <position position="762"/>
    </location>
</feature>
<feature type="binding site" evidence="5">
    <location>
        <position position="139"/>
    </location>
    <ligand>
        <name>Zn(2+)</name>
        <dbReference type="ChEBI" id="CHEBI:29105"/>
        <label>1</label>
        <note>catalytic</note>
    </ligand>
</feature>
<feature type="binding site" evidence="5">
    <location>
        <position position="142"/>
    </location>
    <ligand>
        <name>Zn(2+)</name>
        <dbReference type="ChEBI" id="CHEBI:29105"/>
        <label>1</label>
        <note>catalytic</note>
    </ligand>
</feature>
<feature type="binding site" evidence="5">
    <location>
        <position position="257"/>
    </location>
    <ligand>
        <name>Zn(2+)</name>
        <dbReference type="ChEBI" id="CHEBI:29105"/>
        <label>1</label>
        <note>catalytic</note>
    </ligand>
</feature>
<feature type="binding site" evidence="5">
    <location>
        <position position="564"/>
    </location>
    <ligand>
        <name>Zn(2+)</name>
        <dbReference type="ChEBI" id="CHEBI:29105"/>
        <label>2</label>
        <note>catalytic</note>
    </ligand>
</feature>
<feature type="binding site" evidence="5">
    <location>
        <position position="567"/>
    </location>
    <ligand>
        <name>Zn(2+)</name>
        <dbReference type="ChEBI" id="CHEBI:29105"/>
        <label>2</label>
        <note>catalytic</note>
    </ligand>
</feature>
<feature type="binding site" evidence="5">
    <location>
        <position position="671"/>
    </location>
    <ligand>
        <name>Zn(2+)</name>
        <dbReference type="ChEBI" id="CHEBI:29105"/>
        <label>2</label>
        <note>catalytic</note>
    </ligand>
</feature>
<feature type="modified residue" description="Phosphotyrosine" evidence="2">
    <location>
        <position position="265"/>
    </location>
</feature>
<feature type="modified residue" description="Phosphoserine" evidence="2">
    <location>
        <position position="270"/>
    </location>
</feature>
<feature type="modified residue" description="Phosphoserine" evidence="1">
    <location>
        <position position="1356"/>
    </location>
</feature>
<feature type="modified residue" description="Phosphoserine" evidence="1">
    <location>
        <position position="1359"/>
    </location>
</feature>
<feature type="modified residue" description="Phosphothreonine" evidence="15">
    <location>
        <position position="1366"/>
    </location>
</feature>
<feature type="modified residue" description="Phosphothreonine" evidence="15">
    <location>
        <position position="1368"/>
    </location>
</feature>
<feature type="lipid moiety-binding region" description="S-palmitoyl cysteine" evidence="1">
    <location>
        <position position="1315"/>
    </location>
</feature>
<feature type="lipid moiety-binding region" description="S-palmitoyl cysteine" evidence="1">
    <location>
        <position position="1319"/>
    </location>
</feature>
<feature type="lipid moiety-binding region" description="S-palmitoyl cysteine" evidence="1">
    <location>
        <position position="1321"/>
    </location>
</feature>
<feature type="glycosylation site" description="N-linked (GlcNAc...) asparagine" evidence="1">
    <location>
        <position position="172"/>
    </location>
</feature>
<feature type="glycosylation site" description="N-linked (GlcNAc...) asparagine" evidence="4">
    <location>
        <position position="217"/>
    </location>
</feature>
<feature type="glycosylation site" description="N-linked (GlcNAc...) asparagine" evidence="4">
    <location>
        <position position="399"/>
    </location>
</feature>
<feature type="glycosylation site" description="N-linked (GlcNAc...) asparagine" evidence="4">
    <location>
        <position position="410"/>
    </location>
</feature>
<feature type="glycosylation site" description="N-linked (GlcNAc...) asparagine" evidence="4">
    <location>
        <position position="429"/>
    </location>
</feature>
<feature type="glycosylation site" description="N-linked (GlcNAc...) asparagine" evidence="4">
    <location>
        <position position="522"/>
    </location>
</feature>
<feature type="glycosylation site" description="N-linked (GlcNAc...) asparagine" evidence="4">
    <location>
        <position position="626"/>
    </location>
</feature>
<feature type="glycosylation site" description="N-linked (GlcNAc...) asparagine" evidence="16">
    <location>
        <position position="811"/>
    </location>
</feature>
<feature type="glycosylation site" description="N-linked (GlcNAc...) asparagine" evidence="4">
    <location>
        <position position="855"/>
    </location>
</feature>
<feature type="glycosylation site" description="N-linked (GlcNAc...) asparagine" evidence="4">
    <location>
        <position position="867"/>
    </location>
</feature>
<feature type="glycosylation site" description="N-linked (GlcNAc...) asparagine" evidence="4">
    <location>
        <position position="879"/>
    </location>
</feature>
<feature type="glycosylation site" description="N-linked (GlcNAc...) asparagine" evidence="1">
    <location>
        <position position="953"/>
    </location>
</feature>
<feature type="glycosylation site" description="N-linked (GlcNAc...) asparagine" evidence="4">
    <location>
        <position position="976"/>
    </location>
</feature>
<feature type="glycosylation site" description="N-linked (GlcNAc...) asparagine" evidence="16">
    <location>
        <position position="1068"/>
    </location>
</feature>
<feature type="glycosylation site" description="N-linked (GlcNAc...) asparagine" evidence="4">
    <location>
        <position position="1140"/>
    </location>
</feature>
<feature type="splice variant" id="VSP_051712" description="In isoform 2." evidence="9">
    <location>
        <begin position="1"/>
        <end position="245"/>
    </location>
</feature>
<feature type="splice variant" id="VSP_051713" description="In isoform 2." evidence="9">
    <original>RRNK</original>
    <variation>MSQR</variation>
    <location>
        <begin position="246"/>
        <end position="249"/>
    </location>
</feature>
<feature type="sequence conflict" description="In Ref. 2; AAF91481." evidence="11" ref="2">
    <original>I</original>
    <variation>M</variation>
    <location>
        <position position="455"/>
    </location>
</feature>
<name>CBPD_RAT</name>
<sequence>MASGWDERPPWRLESLRLLPPPPLLLLLLLLRSSAQAAHIKKAEATTTTVGGSEAAEGQFDHYYHEAALGEALEAAAAAGPPGLARLFSIGNSVEGRPLWVLRLTAGLGPPPTPAAVGLDAAGPLLPGRPQVKLVGNMHGDETVSRQVLVYLARELASGYRRGDPRLVRLLNTTDVYLLPSLNPDGFERAREGDCGLGDSGPPGTSGRDNSRGRDLNRSFPDQFSTGEPPSLDEVPEVRALIDWIRRNKFVLSGNLHGGSVVASYPFDDSPEHKTTGIYSKTSDDEVFRYLAKAYASNHPIMRTGEPHCPGDEEETFKDGITNGAHWYDVEGGMQDYNYVWANCFEITLELSCCKYPPASQLRQEWENNRESLITLIEKVHIGIKGFVKDSVTGSGLENATISVAGINHNITTGRFGDFHRLLIPGSYNLTAVSPGYMPLTINNIVVKEGPATEIDFSLQPTVMSVVPDSTEAVTTPGTVAVPNIPPGTPSSHQPIQPKDFHHHHFPDMEIFLRRFANEYPNITRLYSLGKSVESRELYVMEISDNPGVHEPGEPEFKYIGNMHGNEVVGRELLLNLIEYLCKNFGTDPEVTDLVRSTRIHLMPSMNPDGYEKSQEGDSISVVGRNNSNNFDLNRNFPDQFVPITDPTQPETIAVMSWVKAYPFVLSANLHGGSLVVNYPYDDNEQGVATYSKSPDDAVFQQIALSYSKENSQMFQGRPCKDMYLNEYFPHGITNGASWYNVPGGMQDWNYLQTNCFEVTIELGCVKYPFEKELPKYWEQNRRSLIQFMKQVHQGVKGFVLDATDGRGILNATLSVAEINHPVTTYKAGDYWRLLVPGTYKITASARGYNPVTKNVTVRSEGAIQVNFTLVRSSTDANNESKKGKGHSTSTDDTSDPTSKEFEALIKHLSAENGLEGFMLSSSSDLALYRYHSYKDLSEFLRGLVMNYPHITNLTTLGQSVEYRHIWSLEISNKPNISEPEEPKIRFVAGIHGNAPVGTELLLALAEFLCLNYKKNPVVTQLVDRTRIVIVPSLNPDGRERAQEKDCTSKTGHTNARGRDLDTDFTSNASQPETKAIIENLIQKQDFSLSIALDGGSVLVTYPYDKPVQTVENKETLKHLASLYANNHPSMHMGQPSCPNNSDENIPGGVMRGAEWHSHLGSMKDYSVTYGHCPEITVYTSCCYFPSAAQLPALWAENKKSLLSMLVEVHKGVHGLVKDKTGKPISKAVIVLNEGIRVHTKEGGYFHVLLAPGVHNINAIADGYQQQHSQVFVHHDAASSVVIVFDTDNRIFGLPRELVVTVSGATMSALILTACIIWCICSIKSNRHKDGFHRLRQHHDEYEDEIRMMSTGSKKSLLSHEFQDETDTEEETLYSSKH</sequence>
<accession>Q9JHW1</accession>
<accession>O35850</accession>
<proteinExistence type="evidence at protein level"/>
<gene>
    <name evidence="14" type="primary">Cpd</name>
</gene>
<dbReference type="EC" id="3.4.17.22"/>
<dbReference type="EMBL" id="U62897">
    <property type="protein sequence ID" value="AAB70456.1"/>
    <property type="molecule type" value="mRNA"/>
</dbReference>
<dbReference type="EMBL" id="AF284830">
    <property type="protein sequence ID" value="AAF91481.1"/>
    <property type="molecule type" value="mRNA"/>
</dbReference>
<dbReference type="RefSeq" id="NP_036968.1">
    <molecule id="Q9JHW1-1"/>
    <property type="nucleotide sequence ID" value="NM_012836.2"/>
</dbReference>
<dbReference type="SMR" id="Q9JHW1"/>
<dbReference type="FunCoup" id="Q9JHW1">
    <property type="interactions" value="2307"/>
</dbReference>
<dbReference type="IntAct" id="Q9JHW1">
    <property type="interactions" value="3"/>
</dbReference>
<dbReference type="STRING" id="10116.ENSRNOP00000005262"/>
<dbReference type="MEROPS" id="M14.011"/>
<dbReference type="MEROPS" id="M14.016"/>
<dbReference type="MEROPS" id="M14.950"/>
<dbReference type="GlyCosmos" id="Q9JHW1">
    <property type="glycosylation" value="15 sites, 2 glycans"/>
</dbReference>
<dbReference type="GlyGen" id="Q9JHW1">
    <property type="glycosylation" value="16 sites, 2 N-linked glycans (3 sites)"/>
</dbReference>
<dbReference type="iPTMnet" id="Q9JHW1"/>
<dbReference type="PhosphoSitePlus" id="Q9JHW1"/>
<dbReference type="SwissPalm" id="Q9JHW1"/>
<dbReference type="jPOST" id="Q9JHW1"/>
<dbReference type="PaxDb" id="10116-ENSRNOP00000005262"/>
<dbReference type="GeneID" id="25306"/>
<dbReference type="KEGG" id="rno:25306"/>
<dbReference type="AGR" id="RGD:2393"/>
<dbReference type="CTD" id="1362"/>
<dbReference type="RGD" id="2393">
    <property type="gene designation" value="Cpd"/>
</dbReference>
<dbReference type="eggNOG" id="KOG2649">
    <property type="taxonomic scope" value="Eukaryota"/>
</dbReference>
<dbReference type="InParanoid" id="Q9JHW1"/>
<dbReference type="OrthoDB" id="50068at9989"/>
<dbReference type="PhylomeDB" id="Q9JHW1"/>
<dbReference type="BRENDA" id="3.4.17.22">
    <property type="organism ID" value="5301"/>
</dbReference>
<dbReference type="Reactome" id="R-RNO-432722">
    <property type="pathway name" value="Golgi Associated Vesicle Biogenesis"/>
</dbReference>
<dbReference type="Reactome" id="R-RNO-9696264">
    <property type="pathway name" value="RND3 GTPase cycle"/>
</dbReference>
<dbReference type="Reactome" id="R-RNO-9696273">
    <property type="pathway name" value="RND1 GTPase cycle"/>
</dbReference>
<dbReference type="PRO" id="PR:Q9JHW1"/>
<dbReference type="Proteomes" id="UP000002494">
    <property type="component" value="Unplaced"/>
</dbReference>
<dbReference type="GO" id="GO:0005615">
    <property type="term" value="C:extracellular space"/>
    <property type="evidence" value="ECO:0000318"/>
    <property type="project" value="GO_Central"/>
</dbReference>
<dbReference type="GO" id="GO:0016020">
    <property type="term" value="C:membrane"/>
    <property type="evidence" value="ECO:0000250"/>
    <property type="project" value="UniProtKB"/>
</dbReference>
<dbReference type="GO" id="GO:0005634">
    <property type="term" value="C:nucleus"/>
    <property type="evidence" value="ECO:0000314"/>
    <property type="project" value="UniProtKB"/>
</dbReference>
<dbReference type="GO" id="GO:0048471">
    <property type="term" value="C:perinuclear region of cytoplasm"/>
    <property type="evidence" value="ECO:0000314"/>
    <property type="project" value="RGD"/>
</dbReference>
<dbReference type="GO" id="GO:0005886">
    <property type="term" value="C:plasma membrane"/>
    <property type="evidence" value="ECO:0007669"/>
    <property type="project" value="UniProtKB-SubCell"/>
</dbReference>
<dbReference type="GO" id="GO:0005802">
    <property type="term" value="C:trans-Golgi network"/>
    <property type="evidence" value="ECO:0000314"/>
    <property type="project" value="RGD"/>
</dbReference>
<dbReference type="GO" id="GO:0004181">
    <property type="term" value="F:metallocarboxypeptidase activity"/>
    <property type="evidence" value="ECO:0000250"/>
    <property type="project" value="UniProtKB"/>
</dbReference>
<dbReference type="GO" id="GO:0051721">
    <property type="term" value="F:protein phosphatase 2A binding"/>
    <property type="evidence" value="ECO:0000353"/>
    <property type="project" value="RGD"/>
</dbReference>
<dbReference type="GO" id="GO:0044877">
    <property type="term" value="F:protein-containing complex binding"/>
    <property type="evidence" value="ECO:0000353"/>
    <property type="project" value="RGD"/>
</dbReference>
<dbReference type="GO" id="GO:0008270">
    <property type="term" value="F:zinc ion binding"/>
    <property type="evidence" value="ECO:0000250"/>
    <property type="project" value="UniProtKB"/>
</dbReference>
<dbReference type="GO" id="GO:0071352">
    <property type="term" value="P:cellular response to interleukin-2"/>
    <property type="evidence" value="ECO:0000270"/>
    <property type="project" value="RGD"/>
</dbReference>
<dbReference type="GO" id="GO:0006518">
    <property type="term" value="P:peptide metabolic process"/>
    <property type="evidence" value="ECO:0000318"/>
    <property type="project" value="GO_Central"/>
</dbReference>
<dbReference type="GO" id="GO:0016485">
    <property type="term" value="P:protein processing"/>
    <property type="evidence" value="ECO:0000318"/>
    <property type="project" value="GO_Central"/>
</dbReference>
<dbReference type="GO" id="GO:0006508">
    <property type="term" value="P:proteolysis"/>
    <property type="evidence" value="ECO:0000250"/>
    <property type="project" value="UniProtKB"/>
</dbReference>
<dbReference type="CDD" id="cd03863">
    <property type="entry name" value="M14_CPD_II"/>
    <property type="match status" value="1"/>
</dbReference>
<dbReference type="CDD" id="cd06245">
    <property type="entry name" value="M14_CPD_III"/>
    <property type="match status" value="1"/>
</dbReference>
<dbReference type="CDD" id="cd11308">
    <property type="entry name" value="Peptidase_M14NE-CP-C_like"/>
    <property type="match status" value="3"/>
</dbReference>
<dbReference type="FunFam" id="2.60.40.1120:FF:000005">
    <property type="entry name" value="Carboxypeptidase D"/>
    <property type="match status" value="1"/>
</dbReference>
<dbReference type="FunFam" id="2.60.40.1120:FF:000006">
    <property type="entry name" value="Carboxypeptidase D"/>
    <property type="match status" value="1"/>
</dbReference>
<dbReference type="FunFam" id="2.60.40.1120:FF:000008">
    <property type="entry name" value="Carboxypeptidase D"/>
    <property type="match status" value="1"/>
</dbReference>
<dbReference type="FunFam" id="3.40.630.10:FF:000020">
    <property type="entry name" value="Carboxypeptidase D"/>
    <property type="match status" value="1"/>
</dbReference>
<dbReference type="FunFam" id="3.40.630.10:FF:000026">
    <property type="entry name" value="Carboxypeptidase D"/>
    <property type="match status" value="1"/>
</dbReference>
<dbReference type="FunFam" id="3.40.630.10:FF:000043">
    <property type="entry name" value="Carboxypeptidase D"/>
    <property type="match status" value="1"/>
</dbReference>
<dbReference type="Gene3D" id="2.60.40.1120">
    <property type="entry name" value="Carboxypeptidase-like, regulatory domain"/>
    <property type="match status" value="3"/>
</dbReference>
<dbReference type="Gene3D" id="3.40.630.10">
    <property type="entry name" value="Zn peptidases"/>
    <property type="match status" value="3"/>
</dbReference>
<dbReference type="InterPro" id="IPR008969">
    <property type="entry name" value="CarboxyPept-like_regulatory"/>
</dbReference>
<dbReference type="InterPro" id="IPR034224">
    <property type="entry name" value="M14_CPD_II"/>
</dbReference>
<dbReference type="InterPro" id="IPR033848">
    <property type="entry name" value="M14_CPD_III"/>
</dbReference>
<dbReference type="InterPro" id="IPR000834">
    <property type="entry name" value="Peptidase_M14"/>
</dbReference>
<dbReference type="InterPro" id="IPR050753">
    <property type="entry name" value="Peptidase_M14_domain"/>
</dbReference>
<dbReference type="PANTHER" id="PTHR11532:SF73">
    <property type="entry name" value="CARBOXYPEPTIDASE D"/>
    <property type="match status" value="1"/>
</dbReference>
<dbReference type="PANTHER" id="PTHR11532">
    <property type="entry name" value="PROTEASE M14 CARBOXYPEPTIDASE"/>
    <property type="match status" value="1"/>
</dbReference>
<dbReference type="Pfam" id="PF13620">
    <property type="entry name" value="CarboxypepD_reg"/>
    <property type="match status" value="3"/>
</dbReference>
<dbReference type="Pfam" id="PF00246">
    <property type="entry name" value="Peptidase_M14"/>
    <property type="match status" value="3"/>
</dbReference>
<dbReference type="PRINTS" id="PR00765">
    <property type="entry name" value="CRBOXYPTASEA"/>
</dbReference>
<dbReference type="SMART" id="SM00631">
    <property type="entry name" value="Zn_pept"/>
    <property type="match status" value="3"/>
</dbReference>
<dbReference type="SUPFAM" id="SSF49464">
    <property type="entry name" value="Carboxypeptidase regulatory domain-like"/>
    <property type="match status" value="3"/>
</dbReference>
<dbReference type="SUPFAM" id="SSF53187">
    <property type="entry name" value="Zn-dependent exopeptidases"/>
    <property type="match status" value="3"/>
</dbReference>
<dbReference type="PROSITE" id="PS00132">
    <property type="entry name" value="CARBOXYPEPT_ZN_1"/>
    <property type="match status" value="2"/>
</dbReference>
<dbReference type="PROSITE" id="PS00133">
    <property type="entry name" value="CARBOXYPEPT_ZN_2"/>
    <property type="match status" value="2"/>
</dbReference>
<dbReference type="PROSITE" id="PS52035">
    <property type="entry name" value="PEPTIDASE_M14"/>
    <property type="match status" value="3"/>
</dbReference>